<protein>
    <recommendedName>
        <fullName evidence="1">Phosphopantetheine adenylyltransferase</fullName>
        <ecNumber evidence="1">2.7.7.3</ecNumber>
    </recommendedName>
    <alternativeName>
        <fullName evidence="1">Dephospho-CoA pyrophosphorylase</fullName>
    </alternativeName>
    <alternativeName>
        <fullName evidence="1">Pantetheine-phosphate adenylyltransferase</fullName>
        <shortName evidence="1">PPAT</shortName>
    </alternativeName>
</protein>
<feature type="chain" id="PRO_1000076755" description="Phosphopantetheine adenylyltransferase">
    <location>
        <begin position="1"/>
        <end position="161"/>
    </location>
</feature>
<feature type="binding site" evidence="1">
    <location>
        <begin position="9"/>
        <end position="10"/>
    </location>
    <ligand>
        <name>ATP</name>
        <dbReference type="ChEBI" id="CHEBI:30616"/>
    </ligand>
</feature>
<feature type="binding site" evidence="1">
    <location>
        <position position="9"/>
    </location>
    <ligand>
        <name>substrate</name>
    </ligand>
</feature>
<feature type="binding site" evidence="1">
    <location>
        <position position="17"/>
    </location>
    <ligand>
        <name>ATP</name>
        <dbReference type="ChEBI" id="CHEBI:30616"/>
    </ligand>
</feature>
<feature type="binding site" evidence="1">
    <location>
        <position position="41"/>
    </location>
    <ligand>
        <name>substrate</name>
    </ligand>
</feature>
<feature type="binding site" evidence="1">
    <location>
        <position position="73"/>
    </location>
    <ligand>
        <name>substrate</name>
    </ligand>
</feature>
<feature type="binding site" evidence="1">
    <location>
        <position position="87"/>
    </location>
    <ligand>
        <name>substrate</name>
    </ligand>
</feature>
<feature type="binding site" evidence="1">
    <location>
        <begin position="88"/>
        <end position="90"/>
    </location>
    <ligand>
        <name>ATP</name>
        <dbReference type="ChEBI" id="CHEBI:30616"/>
    </ligand>
</feature>
<feature type="binding site" evidence="1">
    <location>
        <position position="98"/>
    </location>
    <ligand>
        <name>ATP</name>
        <dbReference type="ChEBI" id="CHEBI:30616"/>
    </ligand>
</feature>
<feature type="binding site" evidence="1">
    <location>
        <begin position="123"/>
        <end position="129"/>
    </location>
    <ligand>
        <name>ATP</name>
        <dbReference type="ChEBI" id="CHEBI:30616"/>
    </ligand>
</feature>
<feature type="site" description="Transition state stabilizer" evidence="1">
    <location>
        <position position="17"/>
    </location>
</feature>
<evidence type="ECO:0000255" key="1">
    <source>
        <dbReference type="HAMAP-Rule" id="MF_00151"/>
    </source>
</evidence>
<keyword id="KW-0067">ATP-binding</keyword>
<keyword id="KW-0173">Coenzyme A biosynthesis</keyword>
<keyword id="KW-0963">Cytoplasm</keyword>
<keyword id="KW-0460">Magnesium</keyword>
<keyword id="KW-0547">Nucleotide-binding</keyword>
<keyword id="KW-0548">Nucleotidyltransferase</keyword>
<keyword id="KW-1185">Reference proteome</keyword>
<keyword id="KW-0808">Transferase</keyword>
<name>COAD_CHLAA</name>
<organism>
    <name type="scientific">Chloroflexus aurantiacus (strain ATCC 29366 / DSM 635 / J-10-fl)</name>
    <dbReference type="NCBI Taxonomy" id="324602"/>
    <lineage>
        <taxon>Bacteria</taxon>
        <taxon>Bacillati</taxon>
        <taxon>Chloroflexota</taxon>
        <taxon>Chloroflexia</taxon>
        <taxon>Chloroflexales</taxon>
        <taxon>Chloroflexineae</taxon>
        <taxon>Chloroflexaceae</taxon>
        <taxon>Chloroflexus</taxon>
    </lineage>
</organism>
<proteinExistence type="inferred from homology"/>
<dbReference type="EC" id="2.7.7.3" evidence="1"/>
<dbReference type="EMBL" id="CP000909">
    <property type="protein sequence ID" value="ABY35611.1"/>
    <property type="molecule type" value="Genomic_DNA"/>
</dbReference>
<dbReference type="RefSeq" id="WP_012258264.1">
    <property type="nucleotide sequence ID" value="NC_010175.1"/>
</dbReference>
<dbReference type="RefSeq" id="YP_001636000.1">
    <property type="nucleotide sequence ID" value="NC_010175.1"/>
</dbReference>
<dbReference type="SMR" id="A9WH99"/>
<dbReference type="FunCoup" id="A9WH99">
    <property type="interactions" value="445"/>
</dbReference>
<dbReference type="STRING" id="324602.Caur_2402"/>
<dbReference type="EnsemblBacteria" id="ABY35611">
    <property type="protein sequence ID" value="ABY35611"/>
    <property type="gene ID" value="Caur_2402"/>
</dbReference>
<dbReference type="KEGG" id="cau:Caur_2402"/>
<dbReference type="PATRIC" id="fig|324602.8.peg.2716"/>
<dbReference type="eggNOG" id="COG0669">
    <property type="taxonomic scope" value="Bacteria"/>
</dbReference>
<dbReference type="HOGENOM" id="CLU_100149_1_1_0"/>
<dbReference type="InParanoid" id="A9WH99"/>
<dbReference type="UniPathway" id="UPA00241">
    <property type="reaction ID" value="UER00355"/>
</dbReference>
<dbReference type="Proteomes" id="UP000002008">
    <property type="component" value="Chromosome"/>
</dbReference>
<dbReference type="GO" id="GO:0005737">
    <property type="term" value="C:cytoplasm"/>
    <property type="evidence" value="ECO:0007669"/>
    <property type="project" value="UniProtKB-SubCell"/>
</dbReference>
<dbReference type="GO" id="GO:0005524">
    <property type="term" value="F:ATP binding"/>
    <property type="evidence" value="ECO:0007669"/>
    <property type="project" value="UniProtKB-KW"/>
</dbReference>
<dbReference type="GO" id="GO:0004595">
    <property type="term" value="F:pantetheine-phosphate adenylyltransferase activity"/>
    <property type="evidence" value="ECO:0000318"/>
    <property type="project" value="GO_Central"/>
</dbReference>
<dbReference type="GO" id="GO:0015937">
    <property type="term" value="P:coenzyme A biosynthetic process"/>
    <property type="evidence" value="ECO:0000318"/>
    <property type="project" value="GO_Central"/>
</dbReference>
<dbReference type="CDD" id="cd02163">
    <property type="entry name" value="PPAT"/>
    <property type="match status" value="1"/>
</dbReference>
<dbReference type="Gene3D" id="3.40.50.620">
    <property type="entry name" value="HUPs"/>
    <property type="match status" value="1"/>
</dbReference>
<dbReference type="HAMAP" id="MF_00151">
    <property type="entry name" value="PPAT_bact"/>
    <property type="match status" value="1"/>
</dbReference>
<dbReference type="InterPro" id="IPR004821">
    <property type="entry name" value="Cyt_trans-like"/>
</dbReference>
<dbReference type="InterPro" id="IPR001980">
    <property type="entry name" value="PPAT"/>
</dbReference>
<dbReference type="InterPro" id="IPR014729">
    <property type="entry name" value="Rossmann-like_a/b/a_fold"/>
</dbReference>
<dbReference type="NCBIfam" id="TIGR01510">
    <property type="entry name" value="coaD_prev_kdtB"/>
    <property type="match status" value="1"/>
</dbReference>
<dbReference type="NCBIfam" id="TIGR00125">
    <property type="entry name" value="cyt_tran_rel"/>
    <property type="match status" value="1"/>
</dbReference>
<dbReference type="PANTHER" id="PTHR21342">
    <property type="entry name" value="PHOSPHOPANTETHEINE ADENYLYLTRANSFERASE"/>
    <property type="match status" value="1"/>
</dbReference>
<dbReference type="PANTHER" id="PTHR21342:SF1">
    <property type="entry name" value="PHOSPHOPANTETHEINE ADENYLYLTRANSFERASE"/>
    <property type="match status" value="1"/>
</dbReference>
<dbReference type="Pfam" id="PF01467">
    <property type="entry name" value="CTP_transf_like"/>
    <property type="match status" value="1"/>
</dbReference>
<dbReference type="PRINTS" id="PR01020">
    <property type="entry name" value="LPSBIOSNTHSS"/>
</dbReference>
<dbReference type="SUPFAM" id="SSF52374">
    <property type="entry name" value="Nucleotidylyl transferase"/>
    <property type="match status" value="1"/>
</dbReference>
<accession>A9WH99</accession>
<sequence length="161" mass="17930">MRIAIYPGSFDPVTYAHLDIARRATRIFDRVIMAVFDRPQKRLLFSTAERLQLLQAVTADLVNVEATSYEMLTVEFARQVGACAIVRGLRAGSDFEAEFQMAQVNQTIDPNIEVVVLMAGRQFAHISSTAVREMASLGRDPVEFTPPVVVAALREKFAQRG</sequence>
<comment type="function">
    <text evidence="1">Reversibly transfers an adenylyl group from ATP to 4'-phosphopantetheine, yielding dephospho-CoA (dPCoA) and pyrophosphate.</text>
</comment>
<comment type="catalytic activity">
    <reaction evidence="1">
        <text>(R)-4'-phosphopantetheine + ATP + H(+) = 3'-dephospho-CoA + diphosphate</text>
        <dbReference type="Rhea" id="RHEA:19801"/>
        <dbReference type="ChEBI" id="CHEBI:15378"/>
        <dbReference type="ChEBI" id="CHEBI:30616"/>
        <dbReference type="ChEBI" id="CHEBI:33019"/>
        <dbReference type="ChEBI" id="CHEBI:57328"/>
        <dbReference type="ChEBI" id="CHEBI:61723"/>
        <dbReference type="EC" id="2.7.7.3"/>
    </reaction>
</comment>
<comment type="cofactor">
    <cofactor evidence="1">
        <name>Mg(2+)</name>
        <dbReference type="ChEBI" id="CHEBI:18420"/>
    </cofactor>
</comment>
<comment type="pathway">
    <text evidence="1">Cofactor biosynthesis; coenzyme A biosynthesis; CoA from (R)-pantothenate: step 4/5.</text>
</comment>
<comment type="subunit">
    <text evidence="1">Homohexamer.</text>
</comment>
<comment type="subcellular location">
    <subcellularLocation>
        <location evidence="1">Cytoplasm</location>
    </subcellularLocation>
</comment>
<comment type="similarity">
    <text evidence="1">Belongs to the bacterial CoaD family.</text>
</comment>
<reference key="1">
    <citation type="journal article" date="2011" name="BMC Genomics">
        <title>Complete genome sequence of the filamentous anoxygenic phototrophic bacterium Chloroflexus aurantiacus.</title>
        <authorList>
            <person name="Tang K.H."/>
            <person name="Barry K."/>
            <person name="Chertkov O."/>
            <person name="Dalin E."/>
            <person name="Han C.S."/>
            <person name="Hauser L.J."/>
            <person name="Honchak B.M."/>
            <person name="Karbach L.E."/>
            <person name="Land M.L."/>
            <person name="Lapidus A."/>
            <person name="Larimer F.W."/>
            <person name="Mikhailova N."/>
            <person name="Pitluck S."/>
            <person name="Pierson B.K."/>
            <person name="Blankenship R.E."/>
        </authorList>
    </citation>
    <scope>NUCLEOTIDE SEQUENCE [LARGE SCALE GENOMIC DNA]</scope>
    <source>
        <strain>ATCC 29366 / DSM 635 / J-10-fl</strain>
    </source>
</reference>
<gene>
    <name evidence="1" type="primary">coaD</name>
    <name type="ordered locus">Caur_2402</name>
</gene>